<protein>
    <recommendedName>
        <fullName evidence="5">Casein kinase I</fullName>
        <shortName evidence="5">PfCK1</shortName>
        <ecNumber evidence="4">2.7.11.1</ecNumber>
    </recommendedName>
</protein>
<feature type="chain" id="PRO_0000192851" description="Casein kinase I">
    <location>
        <begin position="1"/>
        <end position="324"/>
    </location>
</feature>
<feature type="domain" description="Protein kinase" evidence="2">
    <location>
        <begin position="9"/>
        <end position="278"/>
    </location>
</feature>
<feature type="active site" description="Proton acceptor" evidence="2 3">
    <location>
        <position position="128"/>
    </location>
</feature>
<feature type="binding site" evidence="2">
    <location>
        <begin position="15"/>
        <end position="23"/>
    </location>
    <ligand>
        <name>ATP</name>
        <dbReference type="ChEBI" id="CHEBI:30616"/>
    </ligand>
</feature>
<feature type="binding site" evidence="2">
    <location>
        <position position="38"/>
    </location>
    <ligand>
        <name>ATP</name>
        <dbReference type="ChEBI" id="CHEBI:30616"/>
    </ligand>
</feature>
<feature type="mutagenesis site" description="Moderate decrease in catalytic activity. 2.8-fold decrease in affinity for ATP." evidence="4">
    <location>
        <begin position="2"/>
        <end position="8"/>
    </location>
</feature>
<feature type="mutagenesis site" description="Moderate decrease in catalytic activity. 110-fold decrease in affinity for ATP." evidence="4">
    <original>G</original>
    <variation>A</variation>
    <location>
        <position position="21"/>
    </location>
</feature>
<feature type="mutagenesis site" description="Severe decrease in catalytic activity. 160-fold decrease in affinity for ATP." evidence="4">
    <original>K</original>
    <variation>L</variation>
    <location>
        <position position="38"/>
    </location>
</feature>
<feature type="mutagenesis site" description="Severe decrease in catalytic activity. 178-fold decrease in affinity for ATP." evidence="4">
    <original>K</original>
    <variation>L</variation>
    <location>
        <position position="130"/>
    </location>
</feature>
<feature type="mutagenesis site" description="Severe decrease in catalytic activity. 80-fold decrease in affinity for ATP." evidence="4">
    <original>N</original>
    <variation>A</variation>
    <location>
        <position position="133"/>
    </location>
</feature>
<feature type="mutagenesis site" description="Moderate decrease in catalytic activity. 1.7-fold decrease in affinity for ATP." evidence="4">
    <location>
        <begin position="288"/>
        <end position="324"/>
    </location>
</feature>
<dbReference type="EC" id="2.7.11.1" evidence="4"/>
<dbReference type="EMBL" id="AF017139">
    <property type="protein sequence ID" value="AAB70009.1"/>
    <property type="molecule type" value="mRNA"/>
</dbReference>
<dbReference type="SMR" id="O15726"/>
<dbReference type="BRENDA" id="2.7.11.1">
    <property type="organism ID" value="4889"/>
</dbReference>
<dbReference type="GO" id="GO:0031410">
    <property type="term" value="C:cytoplasmic vesicle"/>
    <property type="evidence" value="ECO:0007669"/>
    <property type="project" value="UniProtKB-KW"/>
</dbReference>
<dbReference type="GO" id="GO:0005576">
    <property type="term" value="C:extracellular region"/>
    <property type="evidence" value="ECO:0007669"/>
    <property type="project" value="UniProtKB-SubCell"/>
</dbReference>
<dbReference type="GO" id="GO:0044228">
    <property type="term" value="C:host cell surface"/>
    <property type="evidence" value="ECO:0007669"/>
    <property type="project" value="UniProtKB-SubCell"/>
</dbReference>
<dbReference type="GO" id="GO:0020009">
    <property type="term" value="C:microneme"/>
    <property type="evidence" value="ECO:0007669"/>
    <property type="project" value="UniProtKB-SubCell"/>
</dbReference>
<dbReference type="GO" id="GO:0005524">
    <property type="term" value="F:ATP binding"/>
    <property type="evidence" value="ECO:0007669"/>
    <property type="project" value="UniProtKB-KW"/>
</dbReference>
<dbReference type="GO" id="GO:0046872">
    <property type="term" value="F:metal ion binding"/>
    <property type="evidence" value="ECO:0007669"/>
    <property type="project" value="UniProtKB-KW"/>
</dbReference>
<dbReference type="GO" id="GO:0106310">
    <property type="term" value="F:protein serine kinase activity"/>
    <property type="evidence" value="ECO:0007669"/>
    <property type="project" value="RHEA"/>
</dbReference>
<dbReference type="GO" id="GO:0004674">
    <property type="term" value="F:protein serine/threonine kinase activity"/>
    <property type="evidence" value="ECO:0000314"/>
    <property type="project" value="CACAO"/>
</dbReference>
<dbReference type="FunFam" id="1.10.510.10:FF:000538">
    <property type="entry name" value="Casein kinase 1"/>
    <property type="match status" value="1"/>
</dbReference>
<dbReference type="Gene3D" id="1.10.510.10">
    <property type="entry name" value="Transferase(Phosphotransferase) domain 1"/>
    <property type="match status" value="1"/>
</dbReference>
<dbReference type="InterPro" id="IPR050235">
    <property type="entry name" value="CK1_Ser-Thr_kinase"/>
</dbReference>
<dbReference type="InterPro" id="IPR011009">
    <property type="entry name" value="Kinase-like_dom_sf"/>
</dbReference>
<dbReference type="InterPro" id="IPR000719">
    <property type="entry name" value="Prot_kinase_dom"/>
</dbReference>
<dbReference type="InterPro" id="IPR017441">
    <property type="entry name" value="Protein_kinase_ATP_BS"/>
</dbReference>
<dbReference type="InterPro" id="IPR008271">
    <property type="entry name" value="Ser/Thr_kinase_AS"/>
</dbReference>
<dbReference type="PANTHER" id="PTHR11909">
    <property type="entry name" value="CASEIN KINASE-RELATED"/>
    <property type="match status" value="1"/>
</dbReference>
<dbReference type="Pfam" id="PF00069">
    <property type="entry name" value="Pkinase"/>
    <property type="match status" value="1"/>
</dbReference>
<dbReference type="SMART" id="SM00220">
    <property type="entry name" value="S_TKc"/>
    <property type="match status" value="1"/>
</dbReference>
<dbReference type="SUPFAM" id="SSF56112">
    <property type="entry name" value="Protein kinase-like (PK-like)"/>
    <property type="match status" value="1"/>
</dbReference>
<dbReference type="PROSITE" id="PS00107">
    <property type="entry name" value="PROTEIN_KINASE_ATP"/>
    <property type="match status" value="1"/>
</dbReference>
<dbReference type="PROSITE" id="PS50011">
    <property type="entry name" value="PROTEIN_KINASE_DOM"/>
    <property type="match status" value="1"/>
</dbReference>
<dbReference type="PROSITE" id="PS00108">
    <property type="entry name" value="PROTEIN_KINASE_ST"/>
    <property type="match status" value="1"/>
</dbReference>
<sequence length="324" mass="37832">MEIRVANKYALGKKLGSGSFGDIYVAKDIVTMEEFAVKLESTRSKHPQLLYESKLYKILGGGIGVPKVYWYGIEGDFTIMVLDLLGPSLEDLFTLCNRKFSLKTVRMTADQMLNRIEYVHSKNFIHRDIKPDNFLIGRGKKVTLIHIIDFGLAKKYRDSRSHTSYPYKEGKNLTGTARYASINTHLGIEQSRRDDIEALGYVLMYFLRGSLPWQGLKAISKKDKYDKIMEKKISTSVEVLCRNASFEFVTYLNYCRSLRFEDRPDYTYLRRLLKDLFIREGFTYDFLFDWTCVYASEKDKKKMLENKNRFDQTADQEGRDQRNN</sequence>
<evidence type="ECO:0000250" key="1">
    <source>
        <dbReference type="UniProtKB" id="Q8IHZ9"/>
    </source>
</evidence>
<evidence type="ECO:0000255" key="2">
    <source>
        <dbReference type="PROSITE-ProRule" id="PRU00159"/>
    </source>
</evidence>
<evidence type="ECO:0000255" key="3">
    <source>
        <dbReference type="PROSITE-ProRule" id="PRU10027"/>
    </source>
</evidence>
<evidence type="ECO:0000269" key="4">
    <source>
    </source>
</evidence>
<evidence type="ECO:0000303" key="5">
    <source>
    </source>
</evidence>
<evidence type="ECO:0000305" key="6"/>
<evidence type="ECO:0000305" key="7">
    <source>
    </source>
</evidence>
<proteinExistence type="evidence at protein level"/>
<comment type="function">
    <text evidence="1 4">Serine/threonine-protein kinase likely to be involved in many cellular processes (PubMed:9334178). Phosphorylates rhoptry protein RON3, nucleosome assembly protein NAPL and DNA/RNA-binding protein ALBA4 in vitro (By similarity).</text>
</comment>
<comment type="catalytic activity">
    <reaction evidence="4">
        <text>L-seryl-[protein] + ATP = O-phospho-L-seryl-[protein] + ADP + H(+)</text>
        <dbReference type="Rhea" id="RHEA:17989"/>
        <dbReference type="Rhea" id="RHEA-COMP:9863"/>
        <dbReference type="Rhea" id="RHEA-COMP:11604"/>
        <dbReference type="ChEBI" id="CHEBI:15378"/>
        <dbReference type="ChEBI" id="CHEBI:29999"/>
        <dbReference type="ChEBI" id="CHEBI:30616"/>
        <dbReference type="ChEBI" id="CHEBI:83421"/>
        <dbReference type="ChEBI" id="CHEBI:456216"/>
        <dbReference type="EC" id="2.7.11.1"/>
    </reaction>
</comment>
<comment type="catalytic activity">
    <reaction evidence="7">
        <text>L-threonyl-[protein] + ATP = O-phospho-L-threonyl-[protein] + ADP + H(+)</text>
        <dbReference type="Rhea" id="RHEA:46608"/>
        <dbReference type="Rhea" id="RHEA-COMP:11060"/>
        <dbReference type="Rhea" id="RHEA-COMP:11605"/>
        <dbReference type="ChEBI" id="CHEBI:15378"/>
        <dbReference type="ChEBI" id="CHEBI:30013"/>
        <dbReference type="ChEBI" id="CHEBI:30616"/>
        <dbReference type="ChEBI" id="CHEBI:61977"/>
        <dbReference type="ChEBI" id="CHEBI:456216"/>
        <dbReference type="EC" id="2.7.11.1"/>
    </reaction>
</comment>
<comment type="cofactor">
    <cofactor evidence="4">
        <name>Mg(2+)</name>
        <dbReference type="ChEBI" id="CHEBI:18420"/>
    </cofactor>
</comment>
<comment type="biophysicochemical properties">
    <kinetics>
        <KM evidence="4">14 uM for ATP (at pH 7.5 and 37 degrees Celsius)</KM>
        <text evidence="4">kcat is 1550 sec(-1) with ATP as substrate (at pH 7.5 and 37 degrees Celsius).</text>
    </kinetics>
</comment>
<comment type="subunit">
    <text evidence="1">Interacts with rhoptry protein RON3; the interaction is direct. Interacts with CK2alpha; the interaction is direct. Interacts with nucleosome assembly protein NAPL. Interacts with RAB5b. Interacts with host GAPVD1. Interacts with host SNX22.</text>
</comment>
<comment type="subcellular location">
    <subcellularLocation>
        <location evidence="1">Cytoplasm</location>
    </subcellularLocation>
    <subcellularLocation>
        <location evidence="1">Cytoplasmic vesicle</location>
        <location evidence="1">Secretory vesicle</location>
        <location evidence="1">Microneme</location>
    </subcellularLocation>
    <subcellularLocation>
        <location evidence="1">Secreted</location>
    </subcellularLocation>
    <subcellularLocation>
        <location evidence="1">Host cell surface</location>
    </subcellularLocation>
    <text evidence="1">At the ring and early trophozoite stages, localizes to the host erythrocyte cell surface. In mature trophozoites, localizes to the parasite cytoplasm. At the segmented schizont stage, localizes to a single dot, probably micronemes, in each merozoite.</text>
</comment>
<comment type="developmental stage">
    <text evidence="4">Expressed during the asexual blood stage; expressed at the ring stage and, to a lesser extent, in trophozoites and schizonts.</text>
</comment>
<comment type="similarity">
    <text evidence="6">Belongs to the protein kinase superfamily. CK1 Ser/Thr protein kinase family. Casein kinase I subfamily.</text>
</comment>
<keyword id="KW-0067">ATP-binding</keyword>
<keyword id="KW-0963">Cytoplasm</keyword>
<keyword id="KW-0968">Cytoplasmic vesicle</keyword>
<keyword id="KW-0418">Kinase</keyword>
<keyword id="KW-0460">Magnesium</keyword>
<keyword id="KW-0479">Metal-binding</keyword>
<keyword id="KW-0547">Nucleotide-binding</keyword>
<keyword id="KW-0964">Secreted</keyword>
<keyword id="KW-0723">Serine/threonine-protein kinase</keyword>
<keyword id="KW-0808">Transferase</keyword>
<reference key="1">
    <citation type="journal article" date="1997" name="J. Biol. Chem.">
        <title>Identification, cloning, and mutational analysis of the casein kinase 1 cDNA of the malaria parasite, Plasmodium falciparum. Stage-specific expression of the gene.</title>
        <authorList>
            <person name="Barik S."/>
            <person name="Taylor R.E."/>
            <person name="Chakrabarti D."/>
        </authorList>
    </citation>
    <scope>NUCLEOTIDE SEQUENCE [MRNA]</scope>
    <scope>FUNCTION</scope>
    <scope>CATALYTIC ACTIVITY</scope>
    <scope>COFACTOR</scope>
    <scope>BIOPHYSICOCHEMICAL PROPERTIES</scope>
    <scope>DEVELOPMENTAL STAGE</scope>
    <scope>MUTAGENESIS OF 2-GLU--LYS-8; GLY-21; LYS-38; LYS-130; ASN-133 AND 288-PHE--ASN-324</scope>
</reference>
<accession>O15726</accession>
<gene>
    <name evidence="5" type="primary">CK1</name>
</gene>
<organism>
    <name type="scientific">Plasmodium falciparum (isolate Dd2)</name>
    <dbReference type="NCBI Taxonomy" id="57267"/>
    <lineage>
        <taxon>Eukaryota</taxon>
        <taxon>Sar</taxon>
        <taxon>Alveolata</taxon>
        <taxon>Apicomplexa</taxon>
        <taxon>Aconoidasida</taxon>
        <taxon>Haemosporida</taxon>
        <taxon>Plasmodiidae</taxon>
        <taxon>Plasmodium</taxon>
        <taxon>Plasmodium (Laverania)</taxon>
    </lineage>
</organism>
<name>KC1_PLAF4</name>